<reference key="1">
    <citation type="submission" date="2005-11" db="EMBL/GenBank/DDBJ databases">
        <authorList>
            <consortium name="NIH - Mammalian Gene Collection (MGC) project"/>
        </authorList>
    </citation>
    <scope>NUCLEOTIDE SEQUENCE [LARGE SCALE MRNA]</scope>
    <source>
        <strain>Crossbred X Angus</strain>
        <tissue>Liver</tissue>
    </source>
</reference>
<reference key="2">
    <citation type="journal article" date="1984" name="Eur. J. Biochem.">
        <title>The primary structure of calf thymus glutaredoxin. Homology with the corresponding Escherichia coli protein but elongation at both ends and with an additional half-cystine/cysteine pair.</title>
        <authorList>
            <person name="Klintrot I.-M."/>
            <person name="Hoeoeg J.-O."/>
            <person name="Joernvall H."/>
            <person name="Holmgren A."/>
            <person name="Luthman M."/>
        </authorList>
    </citation>
    <scope>PROTEIN SEQUENCE OF 2-106</scope>
    <source>
        <tissue>Thymus</tissue>
    </source>
</reference>
<reference key="3">
    <citation type="journal article" date="1989" name="Biochem. Biophys. Res. Commun.">
        <title>A revised sequence of calf thymus glutaredoxin.</title>
        <authorList>
            <person name="Papayannopoulos I.A."/>
            <person name="Gan Z.-R."/>
            <person name="Wells W.W."/>
            <person name="Biemann K."/>
        </authorList>
    </citation>
    <scope>SEQUENCE REVISION TO 1-3 AND 69-72</scope>
    <scope>ACETYLATION AT ALA-2</scope>
    <source>
        <tissue>Thymus</tissue>
    </source>
</reference>
<protein>
    <recommendedName>
        <fullName>Glutaredoxin-1</fullName>
    </recommendedName>
    <alternativeName>
        <fullName>Thioltransferase</fullName>
        <shortName>TTase</shortName>
    </alternativeName>
</protein>
<evidence type="ECO:0000250" key="1">
    <source>
        <dbReference type="UniProtKB" id="Q9QUH0"/>
    </source>
</evidence>
<evidence type="ECO:0000255" key="2">
    <source>
        <dbReference type="PROSITE-ProRule" id="PRU00686"/>
    </source>
</evidence>
<evidence type="ECO:0000269" key="3">
    <source>
    </source>
</evidence>
<evidence type="ECO:0000305" key="4"/>
<proteinExistence type="evidence at protein level"/>
<gene>
    <name type="primary">GLRX</name>
    <name type="synonym">GRX</name>
</gene>
<dbReference type="EMBL" id="BC109978">
    <property type="protein sequence ID" value="AAI09979.1"/>
    <property type="molecule type" value="mRNA"/>
</dbReference>
<dbReference type="PIR" id="A30164">
    <property type="entry name" value="GDBO"/>
</dbReference>
<dbReference type="RefSeq" id="NP_001032693.1">
    <property type="nucleotide sequence ID" value="NM_001037604.3"/>
</dbReference>
<dbReference type="SMR" id="P10575"/>
<dbReference type="FunCoup" id="P10575">
    <property type="interactions" value="374"/>
</dbReference>
<dbReference type="STRING" id="9913.ENSBTAP00000051774"/>
<dbReference type="iPTMnet" id="P10575"/>
<dbReference type="PaxDb" id="9913-ENSBTAP00000051774"/>
<dbReference type="PeptideAtlas" id="P10575"/>
<dbReference type="GeneID" id="515416"/>
<dbReference type="KEGG" id="bta:515416"/>
<dbReference type="CTD" id="2745"/>
<dbReference type="VEuPathDB" id="HostDB:ENSBTAG00000038186"/>
<dbReference type="eggNOG" id="KOG1752">
    <property type="taxonomic scope" value="Eukaryota"/>
</dbReference>
<dbReference type="HOGENOM" id="CLU_026126_7_2_1"/>
<dbReference type="InParanoid" id="P10575"/>
<dbReference type="OMA" id="CWKTQEI"/>
<dbReference type="OrthoDB" id="418495at2759"/>
<dbReference type="TreeFam" id="TF326994"/>
<dbReference type="Proteomes" id="UP000009136">
    <property type="component" value="Chromosome 7"/>
</dbReference>
<dbReference type="Bgee" id="ENSBTAG00000038186">
    <property type="expression patterns" value="Expressed in rumen papilla and 107 other cell types or tissues"/>
</dbReference>
<dbReference type="GO" id="GO:0005737">
    <property type="term" value="C:cytoplasm"/>
    <property type="evidence" value="ECO:0007669"/>
    <property type="project" value="UniProtKB-SubCell"/>
</dbReference>
<dbReference type="GO" id="GO:0015038">
    <property type="term" value="F:glutathione disulfide oxidoreductase activity"/>
    <property type="evidence" value="ECO:0000318"/>
    <property type="project" value="GO_Central"/>
</dbReference>
<dbReference type="CDD" id="cd03419">
    <property type="entry name" value="GRX_GRXh_1_2_like"/>
    <property type="match status" value="1"/>
</dbReference>
<dbReference type="Gene3D" id="3.40.30.10">
    <property type="entry name" value="Glutaredoxin"/>
    <property type="match status" value="1"/>
</dbReference>
<dbReference type="InterPro" id="IPR011767">
    <property type="entry name" value="GLR_AS"/>
</dbReference>
<dbReference type="InterPro" id="IPR047185">
    <property type="entry name" value="GLRX1"/>
</dbReference>
<dbReference type="InterPro" id="IPR002109">
    <property type="entry name" value="Glutaredoxin"/>
</dbReference>
<dbReference type="InterPro" id="IPR011899">
    <property type="entry name" value="Glutaredoxin_euk/vir"/>
</dbReference>
<dbReference type="InterPro" id="IPR014025">
    <property type="entry name" value="Glutaredoxin_subgr"/>
</dbReference>
<dbReference type="InterPro" id="IPR036249">
    <property type="entry name" value="Thioredoxin-like_sf"/>
</dbReference>
<dbReference type="NCBIfam" id="TIGR02180">
    <property type="entry name" value="GRX_euk"/>
    <property type="match status" value="1"/>
</dbReference>
<dbReference type="PANTHER" id="PTHR46185">
    <property type="entry name" value="GLUTAREDOXIN-1"/>
    <property type="match status" value="1"/>
</dbReference>
<dbReference type="PANTHER" id="PTHR46185:SF1">
    <property type="entry name" value="GLUTAREDOXIN-1"/>
    <property type="match status" value="1"/>
</dbReference>
<dbReference type="Pfam" id="PF00462">
    <property type="entry name" value="Glutaredoxin"/>
    <property type="match status" value="1"/>
</dbReference>
<dbReference type="PRINTS" id="PR00160">
    <property type="entry name" value="GLUTAREDOXIN"/>
</dbReference>
<dbReference type="SUPFAM" id="SSF52833">
    <property type="entry name" value="Thioredoxin-like"/>
    <property type="match status" value="1"/>
</dbReference>
<dbReference type="PROSITE" id="PS00195">
    <property type="entry name" value="GLUTAREDOXIN_1"/>
    <property type="match status" value="1"/>
</dbReference>
<dbReference type="PROSITE" id="PS51354">
    <property type="entry name" value="GLUTAREDOXIN_2"/>
    <property type="match status" value="1"/>
</dbReference>
<keyword id="KW-0007">Acetylation</keyword>
<keyword id="KW-0963">Cytoplasm</keyword>
<keyword id="KW-0903">Direct protein sequencing</keyword>
<keyword id="KW-1015">Disulfide bond</keyword>
<keyword id="KW-0249">Electron transport</keyword>
<keyword id="KW-0676">Redox-active center</keyword>
<keyword id="KW-1185">Reference proteome</keyword>
<keyword id="KW-0813">Transport</keyword>
<organism>
    <name type="scientific">Bos taurus</name>
    <name type="common">Bovine</name>
    <dbReference type="NCBI Taxonomy" id="9913"/>
    <lineage>
        <taxon>Eukaryota</taxon>
        <taxon>Metazoa</taxon>
        <taxon>Chordata</taxon>
        <taxon>Craniata</taxon>
        <taxon>Vertebrata</taxon>
        <taxon>Euteleostomi</taxon>
        <taxon>Mammalia</taxon>
        <taxon>Eutheria</taxon>
        <taxon>Laurasiatheria</taxon>
        <taxon>Artiodactyla</taxon>
        <taxon>Ruminantia</taxon>
        <taxon>Pecora</taxon>
        <taxon>Bovidae</taxon>
        <taxon>Bovinae</taxon>
        <taxon>Bos</taxon>
    </lineage>
</organism>
<accession>P10575</accession>
<accession>Q32KQ3</accession>
<sequence>MAQAFVNSKIQPGKVVVFIKPTCPYCRKTQELLSQLPFKQGLLEFVDITAAGNISEIQDYLQQLTGARTVPRVFIGQECIGGCTDLVNMHERGELLTRLKQMGALQ</sequence>
<name>GLRX1_BOVIN</name>
<feature type="initiator methionine" description="Removed" evidence="3">
    <location>
        <position position="1"/>
    </location>
</feature>
<feature type="chain" id="PRO_0000141599" description="Glutaredoxin-1">
    <location>
        <begin position="2"/>
        <end position="106"/>
    </location>
</feature>
<feature type="domain" description="Glutaredoxin" evidence="2">
    <location>
        <begin position="3"/>
        <end position="106"/>
    </location>
</feature>
<feature type="modified residue" description="N-acetylalanine" evidence="3">
    <location>
        <position position="2"/>
    </location>
</feature>
<feature type="modified residue" description="N6-succinyllysine" evidence="1">
    <location>
        <position position="9"/>
    </location>
</feature>
<feature type="disulfide bond" description="Redox-active">
    <location>
        <begin position="23"/>
        <end position="26"/>
    </location>
</feature>
<feature type="disulfide bond">
    <location>
        <begin position="79"/>
        <end position="83"/>
    </location>
</feature>
<comment type="function">
    <text>Has a glutathione-disulfide oxidoreductase activity in the presence of NADPH and glutathione reductase. Reduces low molecular weight disulfides and proteins.</text>
</comment>
<comment type="subcellular location">
    <subcellularLocation>
        <location>Cytoplasm</location>
    </subcellularLocation>
</comment>
<comment type="similarity">
    <text evidence="4">Belongs to the glutaredoxin family.</text>
</comment>